<keyword id="KW-0007">Acetylation</keyword>
<keyword id="KW-0072">Autophagy</keyword>
<keyword id="KW-1003">Cell membrane</keyword>
<keyword id="KW-0143">Chaperone</keyword>
<keyword id="KW-0186">Copper</keyword>
<keyword id="KW-0963">Cytoplasm</keyword>
<keyword id="KW-0903">Direct protein sequencing</keyword>
<keyword id="KW-0256">Endoplasmic reticulum</keyword>
<keyword id="KW-0278">Fertilization</keyword>
<keyword id="KW-0378">Hydrolase</keyword>
<keyword id="KW-0395">Inflammatory response</keyword>
<keyword id="KW-1017">Isopeptide bond</keyword>
<keyword id="KW-0449">Lipoprotein</keyword>
<keyword id="KW-0472">Membrane</keyword>
<keyword id="KW-0496">Mitochondrion</keyword>
<keyword id="KW-0539">Nucleus</keyword>
<keyword id="KW-0558">Oxidation</keyword>
<keyword id="KW-0564">Palmitate</keyword>
<keyword id="KW-0597">Phosphoprotein</keyword>
<keyword id="KW-0645">Protease</keyword>
<keyword id="KW-1185">Reference proteome</keyword>
<keyword id="KW-0694">RNA-binding</keyword>
<keyword id="KW-0346">Stress response</keyword>
<keyword id="KW-0043">Tumor suppressor</keyword>
<keyword id="KW-0832">Ubl conjugation</keyword>
<keyword id="KW-0865">Zymogen</keyword>
<accession>O88767</accession>
<proteinExistence type="evidence at protein level"/>
<sequence length="189" mass="19974">MASKRALVILAKGAEEMETVIPVDIMRRAGIKVTVAGLAGKDPVQCSRDVVICPDTSLEEAKTQGPYDVVVLPGGNLGAQNLSESALVKEILKEQENRKGLIAAICAGPTALLAHEVGFGCKVTSHPLAKDKMMNGSHYSYSESRVEKDGLILTSRGPGTSFEFALAIVEALSGKDMANQVKAPLVLKD</sequence>
<comment type="function">
    <text evidence="1 2">Protein and nucleotide deglycase that catalyzes the deglycation of the Maillard adducts formed between amino groups of proteins or nucleotides and reactive carbonyl groups of glyoxals. Thus, functions as a protein deglycase that repairs methylglyoxal- and glyoxal-glycated proteins, and releases repaired proteins and lactate or glycolate, respectively. Deglycates cysteine, arginine and lysine residues in proteins, and thus reactivates these proteins by reversing glycation by glyoxals. Acts on early glycation intermediates (hemithioacetals and aminocarbinols), preventing the formation of advanced glycation endproducts (AGE) that cause irreversible damage. Also functions as a nucleotide deglycase able to repair glycated guanine in the free nucleotide pool (GTP, GDP, GMP, dGTP) and in DNA and RNA. Is thus involved in a major nucleotide repair system named guanine glycation repair (GG repair), dedicated to reversing methylglyoxal and glyoxal damage via nucleotide sanitization and direct nucleic acid repair. Also displays an apparent glyoxalase activity that in fact reflects its deglycase activity. Plays an important role in cell protection against oxidative stress and cell death acting as oxidative stress sensor and redox-sensitive chaperone and protease; functions probably related to its primary function. It is involved in neuroprotective mechanisms like the stabilization of NFE2L2 and PINK1 proteins, male fertility as a positive regulator of androgen signaling pathway as well as cell growth and transformation through, for instance, the modulation of NF-kappa-B signaling pathway. Eliminates hydrogen peroxide and protects cells against hydrogen peroxide-induced cell death. Required for correct mitochondrial morphology and function as well as for autophagy of dysfunctional mitochondria. Plays a role in regulating expression or stability of the mitochondrial uncoupling proteins SLC25A14 and SLC25A27 in dopaminergic neurons of the substantia nigra pars compacta and attenuates the oxidative stress induced by calcium entry into the neurons via L-type channels during pacemaking. Regulates astrocyte inflammatory responses, may modulate lipid rafts-dependent endocytosis in astrocytes and neuronal cells (By similarity). In pancreatic islets, involved in the maintenance of mitochondrial reactive oxygen species (ROS) levels and glucose homeostasis in an age- and diet dependent manner. Protects pancreatic beta cells from cell death induced by inflammatory and cytotoxic setting (By similarity). Binds to a number of mRNAs containing multiple copies of GG or CC motifs and partially inhibits their translation but dissociates following oxidative stress. Metal-binding protein able to bind copper as well as toxic mercury ions, enhances the cell protection mechanism against induced metal toxicity (By similarity). In macrophages, interacts with the NADPH oxidase subunit NCF1 to direct NADPH oxidase-dependent ROS production, and protects against sepsis (By similarity).</text>
</comment>
<comment type="catalytic activity">
    <reaction evidence="1">
        <text>N(omega)-(1-hydroxy-2-oxopropyl)-L-arginyl-[protein] + H2O = lactate + L-arginyl-[protein] + H(+)</text>
        <dbReference type="Rhea" id="RHEA:49548"/>
        <dbReference type="Rhea" id="RHEA-COMP:10532"/>
        <dbReference type="Rhea" id="RHEA-COMP:12428"/>
        <dbReference type="ChEBI" id="CHEBI:15377"/>
        <dbReference type="ChEBI" id="CHEBI:15378"/>
        <dbReference type="ChEBI" id="CHEBI:24996"/>
        <dbReference type="ChEBI" id="CHEBI:29965"/>
        <dbReference type="ChEBI" id="CHEBI:131708"/>
        <dbReference type="EC" id="3.5.1.124"/>
    </reaction>
</comment>
<comment type="catalytic activity">
    <reaction evidence="1">
        <text>N(6)-(1-hydroxy-2-oxopropyl)-L-lysyl-[protein] + H2O = lactate + L-lysyl-[protein] + H(+)</text>
        <dbReference type="Rhea" id="RHEA:49552"/>
        <dbReference type="Rhea" id="RHEA-COMP:9752"/>
        <dbReference type="Rhea" id="RHEA-COMP:12429"/>
        <dbReference type="ChEBI" id="CHEBI:15377"/>
        <dbReference type="ChEBI" id="CHEBI:15378"/>
        <dbReference type="ChEBI" id="CHEBI:24996"/>
        <dbReference type="ChEBI" id="CHEBI:29969"/>
        <dbReference type="ChEBI" id="CHEBI:131709"/>
        <dbReference type="EC" id="3.5.1.124"/>
    </reaction>
</comment>
<comment type="catalytic activity">
    <reaction evidence="1">
        <text>S-(1-hydroxy-2-oxopropyl)-L-cysteinyl-[protein] + H2O = lactate + L-cysteinyl-[protein] + H(+)</text>
        <dbReference type="Rhea" id="RHEA:49556"/>
        <dbReference type="Rhea" id="RHEA-COMP:10131"/>
        <dbReference type="Rhea" id="RHEA-COMP:12430"/>
        <dbReference type="ChEBI" id="CHEBI:15377"/>
        <dbReference type="ChEBI" id="CHEBI:15378"/>
        <dbReference type="ChEBI" id="CHEBI:24996"/>
        <dbReference type="ChEBI" id="CHEBI:29950"/>
        <dbReference type="ChEBI" id="CHEBI:131710"/>
        <dbReference type="EC" id="3.5.1.124"/>
    </reaction>
</comment>
<comment type="catalytic activity">
    <reaction evidence="1">
        <text>N(omega)-(1-hydroxy-2-oxoethyl)-L-arginyl-[protein] + H2O = L-arginyl-[protein] + glycolate + H(+)</text>
        <dbReference type="Rhea" id="RHEA:57188"/>
        <dbReference type="Rhea" id="RHEA-COMP:10532"/>
        <dbReference type="Rhea" id="RHEA-COMP:14844"/>
        <dbReference type="ChEBI" id="CHEBI:15377"/>
        <dbReference type="ChEBI" id="CHEBI:15378"/>
        <dbReference type="ChEBI" id="CHEBI:29805"/>
        <dbReference type="ChEBI" id="CHEBI:29965"/>
        <dbReference type="ChEBI" id="CHEBI:141553"/>
        <dbReference type="EC" id="3.5.1.124"/>
    </reaction>
</comment>
<comment type="catalytic activity">
    <reaction evidence="1">
        <text>N(6)-(1-hydroxy-2-oxoethyl)-L-lysyl-[protein] + H2O = glycolate + L-lysyl-[protein] + H(+)</text>
        <dbReference type="Rhea" id="RHEA:57192"/>
        <dbReference type="Rhea" id="RHEA-COMP:9752"/>
        <dbReference type="Rhea" id="RHEA-COMP:14845"/>
        <dbReference type="ChEBI" id="CHEBI:15377"/>
        <dbReference type="ChEBI" id="CHEBI:15378"/>
        <dbReference type="ChEBI" id="CHEBI:29805"/>
        <dbReference type="ChEBI" id="CHEBI:29969"/>
        <dbReference type="ChEBI" id="CHEBI:141554"/>
        <dbReference type="EC" id="3.5.1.124"/>
    </reaction>
</comment>
<comment type="catalytic activity">
    <reaction evidence="1">
        <text>S-(1-hydroxy-2-oxoethyl)-L-cysteinyl-[protein] + H2O = glycolate + L-cysteinyl-[protein] + H(+)</text>
        <dbReference type="Rhea" id="RHEA:57196"/>
        <dbReference type="Rhea" id="RHEA-COMP:10131"/>
        <dbReference type="Rhea" id="RHEA-COMP:14846"/>
        <dbReference type="ChEBI" id="CHEBI:15377"/>
        <dbReference type="ChEBI" id="CHEBI:15378"/>
        <dbReference type="ChEBI" id="CHEBI:29805"/>
        <dbReference type="ChEBI" id="CHEBI:29950"/>
        <dbReference type="ChEBI" id="CHEBI:141555"/>
        <dbReference type="EC" id="3.5.1.124"/>
    </reaction>
</comment>
<comment type="catalytic activity">
    <reaction evidence="1">
        <text>N(2)-(1-hydroxy-2-oxopropyl)-dGTP + H2O = lactate + dGTP + H(+)</text>
        <dbReference type="Rhea" id="RHEA:57244"/>
        <dbReference type="ChEBI" id="CHEBI:15377"/>
        <dbReference type="ChEBI" id="CHEBI:15378"/>
        <dbReference type="ChEBI" id="CHEBI:24996"/>
        <dbReference type="ChEBI" id="CHEBI:61429"/>
        <dbReference type="ChEBI" id="CHEBI:141569"/>
    </reaction>
</comment>
<comment type="catalytic activity">
    <reaction evidence="1">
        <text>N(2)-(1-hydroxy-2-oxopropyl)-GTP + H2O = lactate + GTP + H(+)</text>
        <dbReference type="Rhea" id="RHEA:57256"/>
        <dbReference type="ChEBI" id="CHEBI:15377"/>
        <dbReference type="ChEBI" id="CHEBI:15378"/>
        <dbReference type="ChEBI" id="CHEBI:24996"/>
        <dbReference type="ChEBI" id="CHEBI:37565"/>
        <dbReference type="ChEBI" id="CHEBI:141570"/>
    </reaction>
</comment>
<comment type="catalytic activity">
    <reaction evidence="1">
        <text>N(2)-(1-hydroxy-2-oxopropyl)-GDP + H2O = lactate + GDP + H(+)</text>
        <dbReference type="Rhea" id="RHEA:57260"/>
        <dbReference type="ChEBI" id="CHEBI:15377"/>
        <dbReference type="ChEBI" id="CHEBI:15378"/>
        <dbReference type="ChEBI" id="CHEBI:24996"/>
        <dbReference type="ChEBI" id="CHEBI:58189"/>
        <dbReference type="ChEBI" id="CHEBI:141573"/>
    </reaction>
</comment>
<comment type="catalytic activity">
    <reaction evidence="1">
        <text>N(2)-(1-hydroxy-2-oxopropyl)-GMP + H2O = lactate + GMP + H(+)</text>
        <dbReference type="Rhea" id="RHEA:57268"/>
        <dbReference type="ChEBI" id="CHEBI:15377"/>
        <dbReference type="ChEBI" id="CHEBI:15378"/>
        <dbReference type="ChEBI" id="CHEBI:24996"/>
        <dbReference type="ChEBI" id="CHEBI:58115"/>
        <dbReference type="ChEBI" id="CHEBI:141575"/>
    </reaction>
</comment>
<comment type="catalytic activity">
    <reaction evidence="1">
        <text>N(2)-(1-hydroxy-2-oxoethyl)-dGTP + H2O = dGTP + glycolate + H(+)</text>
        <dbReference type="Rhea" id="RHEA:57248"/>
        <dbReference type="ChEBI" id="CHEBI:15377"/>
        <dbReference type="ChEBI" id="CHEBI:15378"/>
        <dbReference type="ChEBI" id="CHEBI:29805"/>
        <dbReference type="ChEBI" id="CHEBI:61429"/>
        <dbReference type="ChEBI" id="CHEBI:141572"/>
    </reaction>
</comment>
<comment type="catalytic activity">
    <reaction evidence="1">
        <text>N(2)-(1-hydroxy-2-oxoethyl)-GTP + H2O = glycolate + GTP + H(+)</text>
        <dbReference type="Rhea" id="RHEA:57252"/>
        <dbReference type="ChEBI" id="CHEBI:15377"/>
        <dbReference type="ChEBI" id="CHEBI:15378"/>
        <dbReference type="ChEBI" id="CHEBI:29805"/>
        <dbReference type="ChEBI" id="CHEBI:37565"/>
        <dbReference type="ChEBI" id="CHEBI:141571"/>
    </reaction>
</comment>
<comment type="catalytic activity">
    <reaction evidence="1">
        <text>N(2)-(1-hydroxy-2-oxoethyl)-GDP + H2O = glycolate + GDP + H(+)</text>
        <dbReference type="Rhea" id="RHEA:57264"/>
        <dbReference type="ChEBI" id="CHEBI:15377"/>
        <dbReference type="ChEBI" id="CHEBI:15378"/>
        <dbReference type="ChEBI" id="CHEBI:29805"/>
        <dbReference type="ChEBI" id="CHEBI:58189"/>
        <dbReference type="ChEBI" id="CHEBI:141574"/>
    </reaction>
</comment>
<comment type="catalytic activity">
    <reaction evidence="1">
        <text>N(2)-(1-hydroxy-2-oxoethyl)-GMP + H2O = glycolate + GMP + H(+)</text>
        <dbReference type="Rhea" id="RHEA:57304"/>
        <dbReference type="ChEBI" id="CHEBI:15377"/>
        <dbReference type="ChEBI" id="CHEBI:15378"/>
        <dbReference type="ChEBI" id="CHEBI:29805"/>
        <dbReference type="ChEBI" id="CHEBI:58115"/>
        <dbReference type="ChEBI" id="CHEBI:141576"/>
    </reaction>
</comment>
<comment type="catalytic activity">
    <reaction evidence="1">
        <text>an N(2)-(1-hydroxy-2-oxopropyl)-guanosine in RNA + H2O = a guanosine in RNA + lactate + H(+)</text>
        <dbReference type="Rhea" id="RHEA:57288"/>
        <dbReference type="Rhea" id="RHEA-COMP:14855"/>
        <dbReference type="Rhea" id="RHEA-COMP:14858"/>
        <dbReference type="ChEBI" id="CHEBI:15377"/>
        <dbReference type="ChEBI" id="CHEBI:15378"/>
        <dbReference type="ChEBI" id="CHEBI:24996"/>
        <dbReference type="ChEBI" id="CHEBI:74269"/>
        <dbReference type="ChEBI" id="CHEBI:141580"/>
    </reaction>
</comment>
<comment type="catalytic activity">
    <reaction evidence="1">
        <text>an N(2)-(1-hydroxy-2-oxopropyl)-2'-deoxyguanosine in DNA + H2O = a 2'-deoxyguanosine in DNA + lactate + H(+)</text>
        <dbReference type="Rhea" id="RHEA:57300"/>
        <dbReference type="Rhea" id="RHEA-COMP:11367"/>
        <dbReference type="Rhea" id="RHEA-COMP:14856"/>
        <dbReference type="ChEBI" id="CHEBI:15377"/>
        <dbReference type="ChEBI" id="CHEBI:15378"/>
        <dbReference type="ChEBI" id="CHEBI:24996"/>
        <dbReference type="ChEBI" id="CHEBI:85445"/>
        <dbReference type="ChEBI" id="CHEBI:141578"/>
    </reaction>
</comment>
<comment type="catalytic activity">
    <reaction evidence="1">
        <text>an N(2)-(1-hydroxy-2-oxoethyl)-guanosine in RNA + H2O = a guanosine in RNA + glycolate + H(+)</text>
        <dbReference type="Rhea" id="RHEA:57292"/>
        <dbReference type="Rhea" id="RHEA-COMP:14855"/>
        <dbReference type="Rhea" id="RHEA-COMP:14859"/>
        <dbReference type="ChEBI" id="CHEBI:15377"/>
        <dbReference type="ChEBI" id="CHEBI:15378"/>
        <dbReference type="ChEBI" id="CHEBI:29805"/>
        <dbReference type="ChEBI" id="CHEBI:74269"/>
        <dbReference type="ChEBI" id="CHEBI:141581"/>
    </reaction>
</comment>
<comment type="catalytic activity">
    <reaction evidence="1">
        <text>an N(2)-(1-hydroxy-2-oxoethyl)-2'-deoxyguanosine in DNA + H2O = a 2'-deoxyguanosine in DNA + glycolate + H(+)</text>
        <dbReference type="Rhea" id="RHEA:57296"/>
        <dbReference type="Rhea" id="RHEA-COMP:11367"/>
        <dbReference type="Rhea" id="RHEA-COMP:14857"/>
        <dbReference type="ChEBI" id="CHEBI:15377"/>
        <dbReference type="ChEBI" id="CHEBI:15378"/>
        <dbReference type="ChEBI" id="CHEBI:29805"/>
        <dbReference type="ChEBI" id="CHEBI:85445"/>
        <dbReference type="ChEBI" id="CHEBI:141579"/>
    </reaction>
</comment>
<comment type="cofactor">
    <text evidence="1">Deglycase activity does not require glutathione as a cofactor, however, glycated glutathione constitutes a PARK7 substrate.</text>
</comment>
<comment type="subunit">
    <text evidence="1 2 6">Homodimer. Binds EFCAB6/DJBP and PIAS2. Part of a ternary complex containing PARK7, EFCAB6/DJBP and AR. Interacts (via N-terminus) with OTUD7B. Interacts with BBS1, HIPK1, CLCF1 and MTERF. Forms a complex with PINK1 and PRKN (By similarity). Interacts (via C-terminus) with NCF1; the interaction is enhanced by LPS and modulates NCF1 phosphorylation and membrane translocation (By similarity). Interacts with NENF (PubMed:31536960).</text>
</comment>
<comment type="subcellular location">
    <subcellularLocation>
        <location evidence="2">Cell membrane</location>
        <topology evidence="2">Lipid-anchor</topology>
    </subcellularLocation>
    <subcellularLocation>
        <location evidence="3">Cytoplasm</location>
    </subcellularLocation>
    <subcellularLocation>
        <location evidence="4">Membrane raft</location>
    </subcellularLocation>
    <subcellularLocation>
        <location evidence="3">Nucleus</location>
    </subcellularLocation>
    <subcellularLocation>
        <location evidence="6">Mitochondrion</location>
    </subcellularLocation>
    <subcellularLocation>
        <location evidence="6">Endoplasmic reticulum</location>
    </subcellularLocation>
    <text evidence="1 4">Under normal conditions, located predominantly in the cytoplasm and, to a lesser extent, in the nucleus and mitochondrion. Translocates to the mitochondrion and subsequently to the nucleus in response to oxidative stress and exerts an increased cytoprotective effect against oxidative damage (By similarity). Membrane raft localization in astrocytes and neuronal cells requires palmitoylation (PubMed:23847046).</text>
</comment>
<comment type="tissue specificity">
    <text evidence="7">Ubiquitous. Detected on epididymal sperm. Highly expressed in testis and prostate. Detected at lower levels in heart, lung, brain, liver, kidney, seminal vesicle, caput and corpus epididymis.</text>
</comment>
<comment type="PTM">
    <text evidence="1">Sumoylated on Lys-130 by PIAS2 or PIAS4; which is essential for cell-growth promoting activity and transforming activity.</text>
</comment>
<comment type="PTM">
    <text evidence="1">Undergoes cleavage of a C-terminal peptide and subsequent activation of protease activity in response to oxidative stress.</text>
</comment>
<comment type="disruption phenotype">
    <text evidence="5">Mutants rear and groom less, they have a shorter stride length than their wild-type counterparts, but take more forelimb and hindlimb steps. They display deficits in short-term spatial memory as early as 4.5 months of age during place preference testing, as well as impaired coping strategies in the forced swim test.</text>
</comment>
<comment type="similarity">
    <text evidence="10">Belongs to the peptidase C56 family.</text>
</comment>
<comment type="caution">
    <text evidence="1">Glyoxalase activity has been reported. It may however reflect its deglycase activity.</text>
</comment>
<comment type="caution">
    <text evidence="1">The protein deglycation activity is controversial. It has been ascribed to a TRIS buffer artifact by a publication and as a result of the removal of methylglyoxal by glyoxalase activity that leads to a subsequent decomposition of hemithioacetals and hemianimals due to the shift in equilibrium position by another one. However, biochemical experiments showing that PARK7 is a bona fide deglycase have been performed.</text>
</comment>
<name>PARK7_RAT</name>
<protein>
    <recommendedName>
        <fullName evidence="10">Parkinson disease protein 7 homolog</fullName>
    </recommendedName>
    <alternativeName>
        <fullName evidence="9">Contraception-associated protein 1</fullName>
        <shortName>Protein CAP1</shortName>
    </alternativeName>
    <alternativeName>
        <fullName evidence="8">Fertility protein SP22</fullName>
    </alternativeName>
    <alternativeName>
        <fullName evidence="1">Maillard deglycase</fullName>
    </alternativeName>
    <alternativeName>
        <fullName evidence="1">Parkinsonism-associated deglycase</fullName>
    </alternativeName>
    <alternativeName>
        <fullName evidence="1">Protein DJ-1</fullName>
        <shortName>DJ-1</shortName>
    </alternativeName>
    <alternativeName>
        <fullName evidence="1">Protein/nucleic acid deglycase DJ-1</fullName>
        <ecNumber evidence="1">3.1.2.-</ecNumber>
        <ecNumber evidence="1">3.5.1.-</ecNumber>
        <ecNumber evidence="1">3.5.1.124</ecNumber>
    </alternativeName>
</protein>
<dbReference type="EC" id="3.1.2.-" evidence="1"/>
<dbReference type="EC" id="3.5.1.-" evidence="1"/>
<dbReference type="EC" id="3.5.1.124" evidence="1"/>
<dbReference type="EMBL" id="AJ007291">
    <property type="protein sequence ID" value="CAA07434.1"/>
    <property type="molecule type" value="mRNA"/>
</dbReference>
<dbReference type="EMBL" id="AF157511">
    <property type="protein sequence ID" value="AAD43956.1"/>
    <property type="molecule type" value="mRNA"/>
</dbReference>
<dbReference type="EMBL" id="AF157512">
    <property type="protein sequence ID" value="AAD43957.1"/>
    <property type="molecule type" value="mRNA"/>
</dbReference>
<dbReference type="PIR" id="JE0344">
    <property type="entry name" value="JE0344"/>
</dbReference>
<dbReference type="RefSeq" id="NP_001264179.1">
    <property type="nucleotide sequence ID" value="NM_001277250.1"/>
</dbReference>
<dbReference type="RefSeq" id="NP_001264180.1">
    <property type="nucleotide sequence ID" value="NM_001277251.1"/>
</dbReference>
<dbReference type="RefSeq" id="NP_001264181.1">
    <property type="nucleotide sequence ID" value="NM_001277252.1"/>
</dbReference>
<dbReference type="RefSeq" id="NP_001264182.1">
    <property type="nucleotide sequence ID" value="NM_001277253.1"/>
</dbReference>
<dbReference type="RefSeq" id="NP_476484.1">
    <property type="nucleotide sequence ID" value="NM_057143.2"/>
</dbReference>
<dbReference type="SMR" id="O88767"/>
<dbReference type="BioGRID" id="250731">
    <property type="interactions" value="92"/>
</dbReference>
<dbReference type="FunCoup" id="O88767">
    <property type="interactions" value="1449"/>
</dbReference>
<dbReference type="IntAct" id="O88767">
    <property type="interactions" value="2"/>
</dbReference>
<dbReference type="MINT" id="O88767"/>
<dbReference type="STRING" id="10116.ENSRNOP00000074942"/>
<dbReference type="MEROPS" id="C56.002"/>
<dbReference type="GlyGen" id="O88767">
    <property type="glycosylation" value="1 site, 1 O-linked glycan (1 site)"/>
</dbReference>
<dbReference type="iPTMnet" id="O88767"/>
<dbReference type="PhosphoSitePlus" id="O88767"/>
<dbReference type="jPOST" id="O88767"/>
<dbReference type="PaxDb" id="10116-ENSRNOP00000024711"/>
<dbReference type="Ensembl" id="ENSRNOT00000087402.2">
    <property type="protein sequence ID" value="ENSRNOP00000072068.1"/>
    <property type="gene ID" value="ENSRNOG00000018289.7"/>
</dbReference>
<dbReference type="GeneID" id="117287"/>
<dbReference type="KEGG" id="rno:117287"/>
<dbReference type="UCSC" id="RGD:621808">
    <property type="organism name" value="rat"/>
</dbReference>
<dbReference type="AGR" id="RGD:621808"/>
<dbReference type="CTD" id="11315"/>
<dbReference type="RGD" id="621808">
    <property type="gene designation" value="Park7"/>
</dbReference>
<dbReference type="eggNOG" id="KOG2764">
    <property type="taxonomic scope" value="Eukaryota"/>
</dbReference>
<dbReference type="GeneTree" id="ENSGT00390000001231"/>
<dbReference type="HOGENOM" id="CLU_000445_44_2_1"/>
<dbReference type="InParanoid" id="O88767"/>
<dbReference type="Reactome" id="R-RNO-3899300">
    <property type="pathway name" value="SUMOylation of transcription cofactors"/>
</dbReference>
<dbReference type="Reactome" id="R-RNO-9646399">
    <property type="pathway name" value="Aggrephagy"/>
</dbReference>
<dbReference type="PRO" id="PR:O88767"/>
<dbReference type="Proteomes" id="UP000002494">
    <property type="component" value="Chromosome 5"/>
</dbReference>
<dbReference type="Bgee" id="ENSRNOG00000018289">
    <property type="expression patterns" value="Expressed in skeletal muscle tissue and 19 other cell types or tissues"/>
</dbReference>
<dbReference type="ExpressionAtlas" id="O88767">
    <property type="expression patterns" value="baseline and differential"/>
</dbReference>
<dbReference type="GO" id="GO:0030424">
    <property type="term" value="C:axon"/>
    <property type="evidence" value="ECO:0000314"/>
    <property type="project" value="RGD"/>
</dbReference>
<dbReference type="GO" id="GO:0044297">
    <property type="term" value="C:cell body"/>
    <property type="evidence" value="ECO:0000266"/>
    <property type="project" value="RGD"/>
</dbReference>
<dbReference type="GO" id="GO:0000785">
    <property type="term" value="C:chromatin"/>
    <property type="evidence" value="ECO:0000266"/>
    <property type="project" value="RGD"/>
</dbReference>
<dbReference type="GO" id="GO:0005737">
    <property type="term" value="C:cytoplasm"/>
    <property type="evidence" value="ECO:0000250"/>
    <property type="project" value="UniProtKB"/>
</dbReference>
<dbReference type="GO" id="GO:0005829">
    <property type="term" value="C:cytosol"/>
    <property type="evidence" value="ECO:0000266"/>
    <property type="project" value="RGD"/>
</dbReference>
<dbReference type="GO" id="GO:0005783">
    <property type="term" value="C:endoplasmic reticulum"/>
    <property type="evidence" value="ECO:0000314"/>
    <property type="project" value="UniProtKB"/>
</dbReference>
<dbReference type="GO" id="GO:0070062">
    <property type="term" value="C:extracellular exosome"/>
    <property type="evidence" value="ECO:0000250"/>
    <property type="project" value="ParkinsonsUK-UCL"/>
</dbReference>
<dbReference type="GO" id="GO:0045121">
    <property type="term" value="C:membrane raft"/>
    <property type="evidence" value="ECO:0007669"/>
    <property type="project" value="UniProtKB-SubCell"/>
</dbReference>
<dbReference type="GO" id="GO:0005758">
    <property type="term" value="C:mitochondrial intermembrane space"/>
    <property type="evidence" value="ECO:0000266"/>
    <property type="project" value="RGD"/>
</dbReference>
<dbReference type="GO" id="GO:0005759">
    <property type="term" value="C:mitochondrial matrix"/>
    <property type="evidence" value="ECO:0000266"/>
    <property type="project" value="RGD"/>
</dbReference>
<dbReference type="GO" id="GO:0005739">
    <property type="term" value="C:mitochondrion"/>
    <property type="evidence" value="ECO:0000314"/>
    <property type="project" value="UniProtKB"/>
</dbReference>
<dbReference type="GO" id="GO:0043005">
    <property type="term" value="C:neuron projection"/>
    <property type="evidence" value="ECO:0000266"/>
    <property type="project" value="RGD"/>
</dbReference>
<dbReference type="GO" id="GO:0005634">
    <property type="term" value="C:nucleus"/>
    <property type="evidence" value="ECO:0000250"/>
    <property type="project" value="UniProtKB"/>
</dbReference>
<dbReference type="GO" id="GO:0048471">
    <property type="term" value="C:perinuclear region of cytoplasm"/>
    <property type="evidence" value="ECO:0000266"/>
    <property type="project" value="RGD"/>
</dbReference>
<dbReference type="GO" id="GO:0005886">
    <property type="term" value="C:plasma membrane"/>
    <property type="evidence" value="ECO:0007669"/>
    <property type="project" value="UniProtKB-SubCell"/>
</dbReference>
<dbReference type="GO" id="GO:0016605">
    <property type="term" value="C:PML body"/>
    <property type="evidence" value="ECO:0000250"/>
    <property type="project" value="ParkinsonsUK-UCL"/>
</dbReference>
<dbReference type="GO" id="GO:0061827">
    <property type="term" value="C:sperm head"/>
    <property type="evidence" value="ECO:0000314"/>
    <property type="project" value="RGD"/>
</dbReference>
<dbReference type="GO" id="GO:0008021">
    <property type="term" value="C:synaptic vesicle"/>
    <property type="evidence" value="ECO:0000266"/>
    <property type="project" value="RGD"/>
</dbReference>
<dbReference type="GO" id="GO:0005507">
    <property type="term" value="F:copper ion binding"/>
    <property type="evidence" value="ECO:0000250"/>
    <property type="project" value="UniProtKB"/>
</dbReference>
<dbReference type="GO" id="GO:1903135">
    <property type="term" value="F:cupric ion binding"/>
    <property type="evidence" value="ECO:0000250"/>
    <property type="project" value="ParkinsonsUK-UCL"/>
</dbReference>
<dbReference type="GO" id="GO:1903136">
    <property type="term" value="F:cuprous ion binding"/>
    <property type="evidence" value="ECO:0000250"/>
    <property type="project" value="ParkinsonsUK-UCL"/>
</dbReference>
<dbReference type="GO" id="GO:0019955">
    <property type="term" value="F:cytokine binding"/>
    <property type="evidence" value="ECO:0000250"/>
    <property type="project" value="ParkinsonsUK-UCL"/>
</dbReference>
<dbReference type="GO" id="GO:0140297">
    <property type="term" value="F:DNA-binding transcription factor binding"/>
    <property type="evidence" value="ECO:0000250"/>
    <property type="project" value="ParkinsonsUK-UCL"/>
</dbReference>
<dbReference type="GO" id="GO:0008047">
    <property type="term" value="F:enzyme activator activity"/>
    <property type="evidence" value="ECO:0000250"/>
    <property type="project" value="ParkinsonsUK-UCL"/>
</dbReference>
<dbReference type="GO" id="GO:0019899">
    <property type="term" value="F:enzyme binding"/>
    <property type="evidence" value="ECO:0000266"/>
    <property type="project" value="RGD"/>
</dbReference>
<dbReference type="GO" id="GO:1990422">
    <property type="term" value="F:glyoxalase (glycolic acid-forming) activity"/>
    <property type="evidence" value="ECO:0000250"/>
    <property type="project" value="UniProtKB"/>
</dbReference>
<dbReference type="GO" id="GO:0042802">
    <property type="term" value="F:identical protein binding"/>
    <property type="evidence" value="ECO:0000266"/>
    <property type="project" value="RGD"/>
</dbReference>
<dbReference type="GO" id="GO:0019900">
    <property type="term" value="F:kinase binding"/>
    <property type="evidence" value="ECO:0000266"/>
    <property type="project" value="RGD"/>
</dbReference>
<dbReference type="GO" id="GO:0036478">
    <property type="term" value="F:L-dopa decarboxylase activator activity"/>
    <property type="evidence" value="ECO:0000250"/>
    <property type="project" value="ParkinsonsUK-UCL"/>
</dbReference>
<dbReference type="GO" id="GO:0045340">
    <property type="term" value="F:mercury ion binding"/>
    <property type="evidence" value="ECO:0000250"/>
    <property type="project" value="UniProtKB"/>
</dbReference>
<dbReference type="GO" id="GO:0003729">
    <property type="term" value="F:mRNA binding"/>
    <property type="evidence" value="ECO:0000250"/>
    <property type="project" value="UniProtKB"/>
</dbReference>
<dbReference type="GO" id="GO:0050681">
    <property type="term" value="F:nuclear androgen receptor binding"/>
    <property type="evidence" value="ECO:0000250"/>
    <property type="project" value="ParkinsonsUK-UCL"/>
</dbReference>
<dbReference type="GO" id="GO:0016684">
    <property type="term" value="F:oxidoreductase activity, acting on peroxide as acceptor"/>
    <property type="evidence" value="ECO:0000266"/>
    <property type="project" value="RGD"/>
</dbReference>
<dbReference type="GO" id="GO:0019826">
    <property type="term" value="F:oxygen sensor activity"/>
    <property type="evidence" value="ECO:0000266"/>
    <property type="project" value="RGD"/>
</dbReference>
<dbReference type="GO" id="GO:0008233">
    <property type="term" value="F:peptidase activity"/>
    <property type="evidence" value="ECO:0000250"/>
    <property type="project" value="UniProtKB"/>
</dbReference>
<dbReference type="GO" id="GO:0030414">
    <property type="term" value="F:peptidase inhibitor activity"/>
    <property type="evidence" value="ECO:0000250"/>
    <property type="project" value="ParkinsonsUK-UCL"/>
</dbReference>
<dbReference type="GO" id="GO:0051920">
    <property type="term" value="F:peroxiredoxin activity"/>
    <property type="evidence" value="ECO:0000266"/>
    <property type="project" value="RGD"/>
</dbReference>
<dbReference type="GO" id="GO:0036524">
    <property type="term" value="F:protein deglycase activity"/>
    <property type="evidence" value="ECO:0000250"/>
    <property type="project" value="UniProtKB"/>
</dbReference>
<dbReference type="GO" id="GO:0042803">
    <property type="term" value="F:protein homodimerization activity"/>
    <property type="evidence" value="ECO:0000250"/>
    <property type="project" value="UniProtKB"/>
</dbReference>
<dbReference type="GO" id="GO:0097110">
    <property type="term" value="F:scaffold protein binding"/>
    <property type="evidence" value="ECO:0000250"/>
    <property type="project" value="ParkinsonsUK-UCL"/>
</dbReference>
<dbReference type="GO" id="GO:0030546">
    <property type="term" value="F:signaling receptor activator activity"/>
    <property type="evidence" value="ECO:0000266"/>
    <property type="project" value="RGD"/>
</dbReference>
<dbReference type="GO" id="GO:0005102">
    <property type="term" value="F:signaling receptor binding"/>
    <property type="evidence" value="ECO:0000250"/>
    <property type="project" value="ParkinsonsUK-UCL"/>
</dbReference>
<dbReference type="GO" id="GO:0044388">
    <property type="term" value="F:small protein activating enzyme binding"/>
    <property type="evidence" value="ECO:0000250"/>
    <property type="project" value="ParkinsonsUK-UCL"/>
</dbReference>
<dbReference type="GO" id="GO:0016532">
    <property type="term" value="F:superoxide dismutase copper chaperone activity"/>
    <property type="evidence" value="ECO:0000250"/>
    <property type="project" value="ParkinsonsUK-UCL"/>
</dbReference>
<dbReference type="GO" id="GO:0003713">
    <property type="term" value="F:transcription coactivator activity"/>
    <property type="evidence" value="ECO:0000250"/>
    <property type="project" value="ParkinsonsUK-UCL"/>
</dbReference>
<dbReference type="GO" id="GO:0036470">
    <property type="term" value="F:tyrosine 3-monooxygenase activator activity"/>
    <property type="evidence" value="ECO:0000250"/>
    <property type="project" value="ParkinsonsUK-UCL"/>
</dbReference>
<dbReference type="GO" id="GO:0044390">
    <property type="term" value="F:ubiquitin-like protein conjugating enzyme binding"/>
    <property type="evidence" value="ECO:0000250"/>
    <property type="project" value="ParkinsonsUK-UCL"/>
</dbReference>
<dbReference type="GO" id="GO:0055105">
    <property type="term" value="F:ubiquitin-protein transferase inhibitor activity"/>
    <property type="evidence" value="ECO:0000266"/>
    <property type="project" value="RGD"/>
</dbReference>
<dbReference type="GO" id="GO:1990381">
    <property type="term" value="F:ubiquitin-specific protease binding"/>
    <property type="evidence" value="ECO:0000266"/>
    <property type="project" value="RGD"/>
</dbReference>
<dbReference type="GO" id="GO:0008344">
    <property type="term" value="P:adult locomotory behavior"/>
    <property type="evidence" value="ECO:0000266"/>
    <property type="project" value="RGD"/>
</dbReference>
<dbReference type="GO" id="GO:0030521">
    <property type="term" value="P:androgen receptor signaling pathway"/>
    <property type="evidence" value="ECO:0000250"/>
    <property type="project" value="ParkinsonsUK-UCL"/>
</dbReference>
<dbReference type="GO" id="GO:0006914">
    <property type="term" value="P:autophagy"/>
    <property type="evidence" value="ECO:0007669"/>
    <property type="project" value="UniProtKB-KW"/>
</dbReference>
<dbReference type="GO" id="GO:0110095">
    <property type="term" value="P:cellular detoxification of aldehyde"/>
    <property type="evidence" value="ECO:0000250"/>
    <property type="project" value="UniProtKB"/>
</dbReference>
<dbReference type="GO" id="GO:0140041">
    <property type="term" value="P:cellular detoxification of methylglyoxal"/>
    <property type="evidence" value="ECO:0000250"/>
    <property type="project" value="UniProtKB"/>
</dbReference>
<dbReference type="GO" id="GO:0036471">
    <property type="term" value="P:cellular response to glyoxal"/>
    <property type="evidence" value="ECO:0000250"/>
    <property type="project" value="ParkinsonsUK-UCL"/>
</dbReference>
<dbReference type="GO" id="GO:0070301">
    <property type="term" value="P:cellular response to hydrogen peroxide"/>
    <property type="evidence" value="ECO:0000266"/>
    <property type="project" value="RGD"/>
</dbReference>
<dbReference type="GO" id="GO:0071456">
    <property type="term" value="P:cellular response to hypoxia"/>
    <property type="evidence" value="ECO:0000270"/>
    <property type="project" value="RGD"/>
</dbReference>
<dbReference type="GO" id="GO:0071222">
    <property type="term" value="P:cellular response to lipopolysaccharide"/>
    <property type="evidence" value="ECO:0000270"/>
    <property type="project" value="RGD"/>
</dbReference>
<dbReference type="GO" id="GO:0034599">
    <property type="term" value="P:cellular response to oxidative stress"/>
    <property type="evidence" value="ECO:0000250"/>
    <property type="project" value="UniProtKB"/>
</dbReference>
<dbReference type="GO" id="GO:0034614">
    <property type="term" value="P:cellular response to reactive oxygen species"/>
    <property type="evidence" value="ECO:0000266"/>
    <property type="project" value="RGD"/>
</dbReference>
<dbReference type="GO" id="GO:0070994">
    <property type="term" value="P:detection of oxidative stress"/>
    <property type="evidence" value="ECO:0000266"/>
    <property type="project" value="RGD"/>
</dbReference>
<dbReference type="GO" id="GO:0010273">
    <property type="term" value="P:detoxification of copper ion"/>
    <property type="evidence" value="ECO:0000250"/>
    <property type="project" value="UniProtKB"/>
</dbReference>
<dbReference type="GO" id="GO:0061691">
    <property type="term" value="P:detoxification of hydrogen peroxide"/>
    <property type="evidence" value="ECO:0000250"/>
    <property type="project" value="UniProtKB"/>
</dbReference>
<dbReference type="GO" id="GO:0050787">
    <property type="term" value="P:detoxification of mercury ion"/>
    <property type="evidence" value="ECO:0000266"/>
    <property type="project" value="RGD"/>
</dbReference>
<dbReference type="GO" id="GO:0006281">
    <property type="term" value="P:DNA repair"/>
    <property type="evidence" value="ECO:0000250"/>
    <property type="project" value="UniProtKB"/>
</dbReference>
<dbReference type="GO" id="GO:0051583">
    <property type="term" value="P:dopamine uptake involved in synaptic transmission"/>
    <property type="evidence" value="ECO:0000266"/>
    <property type="project" value="RGD"/>
</dbReference>
<dbReference type="GO" id="GO:0009566">
    <property type="term" value="P:fertilization"/>
    <property type="evidence" value="ECO:0000304"/>
    <property type="project" value="ParkinsonsUK-UCL"/>
</dbReference>
<dbReference type="GO" id="GO:0042593">
    <property type="term" value="P:glucose homeostasis"/>
    <property type="evidence" value="ECO:0000250"/>
    <property type="project" value="UniProtKB"/>
</dbReference>
<dbReference type="GO" id="GO:0046295">
    <property type="term" value="P:glycolate biosynthetic process"/>
    <property type="evidence" value="ECO:0000250"/>
    <property type="project" value="ParkinsonsUK-UCL"/>
</dbReference>
<dbReference type="GO" id="GO:1903189">
    <property type="term" value="P:glyoxal metabolic process"/>
    <property type="evidence" value="ECO:0000266"/>
    <property type="project" value="RGD"/>
</dbReference>
<dbReference type="GO" id="GO:0106044">
    <property type="term" value="P:guanine deglycation"/>
    <property type="evidence" value="ECO:0000250"/>
    <property type="project" value="UniProtKB"/>
</dbReference>
<dbReference type="GO" id="GO:0106046">
    <property type="term" value="P:guanine deglycation, glyoxal removal"/>
    <property type="evidence" value="ECO:0000250"/>
    <property type="project" value="UniProtKB"/>
</dbReference>
<dbReference type="GO" id="GO:0106045">
    <property type="term" value="P:guanine deglycation, methylglyoxal removal"/>
    <property type="evidence" value="ECO:0000250"/>
    <property type="project" value="UniProtKB"/>
</dbReference>
<dbReference type="GO" id="GO:0042743">
    <property type="term" value="P:hydrogen peroxide metabolic process"/>
    <property type="evidence" value="ECO:0000266"/>
    <property type="project" value="RGD"/>
</dbReference>
<dbReference type="GO" id="GO:0006954">
    <property type="term" value="P:inflammatory response"/>
    <property type="evidence" value="ECO:0007669"/>
    <property type="project" value="UniProtKB-KW"/>
</dbReference>
<dbReference type="GO" id="GO:0030073">
    <property type="term" value="P:insulin secretion"/>
    <property type="evidence" value="ECO:0000250"/>
    <property type="project" value="UniProtKB"/>
</dbReference>
<dbReference type="GO" id="GO:0019249">
    <property type="term" value="P:lactate biosynthetic process"/>
    <property type="evidence" value="ECO:0000266"/>
    <property type="project" value="RGD"/>
</dbReference>
<dbReference type="GO" id="GO:0060135">
    <property type="term" value="P:maternal process involved in female pregnancy"/>
    <property type="evidence" value="ECO:0000270"/>
    <property type="project" value="RGD"/>
</dbReference>
<dbReference type="GO" id="GO:0051899">
    <property type="term" value="P:membrane depolarization"/>
    <property type="evidence" value="ECO:0000266"/>
    <property type="project" value="RGD"/>
</dbReference>
<dbReference type="GO" id="GO:0060081">
    <property type="term" value="P:membrane hyperpolarization"/>
    <property type="evidence" value="ECO:0000266"/>
    <property type="project" value="RGD"/>
</dbReference>
<dbReference type="GO" id="GO:0061727">
    <property type="term" value="P:methylglyoxal catabolic process to lactate"/>
    <property type="evidence" value="ECO:0000250"/>
    <property type="project" value="UniProtKB"/>
</dbReference>
<dbReference type="GO" id="GO:0009438">
    <property type="term" value="P:methylglyoxal metabolic process"/>
    <property type="evidence" value="ECO:0000266"/>
    <property type="project" value="RGD"/>
</dbReference>
<dbReference type="GO" id="GO:0007005">
    <property type="term" value="P:mitochondrion organization"/>
    <property type="evidence" value="ECO:0000250"/>
    <property type="project" value="UniProtKB"/>
</dbReference>
<dbReference type="GO" id="GO:1903073">
    <property type="term" value="P:negative regulation of death-inducing signaling complex assembly"/>
    <property type="evidence" value="ECO:0000266"/>
    <property type="project" value="RGD"/>
</dbReference>
<dbReference type="GO" id="GO:1902236">
    <property type="term" value="P:negative regulation of endoplasmic reticulum stress-induced intrinsic apoptotic signaling pathway"/>
    <property type="evidence" value="ECO:0000266"/>
    <property type="project" value="RGD"/>
</dbReference>
<dbReference type="GO" id="GO:2001237">
    <property type="term" value="P:negative regulation of extrinsic apoptotic signaling pathway"/>
    <property type="evidence" value="ECO:0000250"/>
    <property type="project" value="ParkinsonsUK-UCL"/>
</dbReference>
<dbReference type="GO" id="GO:0010629">
    <property type="term" value="P:negative regulation of gene expression"/>
    <property type="evidence" value="ECO:0000266"/>
    <property type="project" value="RGD"/>
</dbReference>
<dbReference type="GO" id="GO:1903384">
    <property type="term" value="P:negative regulation of hydrogen peroxide-induced neuron intrinsic apoptotic signaling pathway"/>
    <property type="evidence" value="ECO:0000266"/>
    <property type="project" value="RGD"/>
</dbReference>
<dbReference type="GO" id="GO:1903751">
    <property type="term" value="P:negative regulation of intrinsic apoptotic signaling pathway in response to hydrogen peroxide"/>
    <property type="evidence" value="ECO:0000266"/>
    <property type="project" value="RGD"/>
</dbReference>
<dbReference type="GO" id="GO:0043524">
    <property type="term" value="P:negative regulation of neuron apoptotic process"/>
    <property type="evidence" value="ECO:0000250"/>
    <property type="project" value="ParkinsonsUK-UCL"/>
</dbReference>
<dbReference type="GO" id="GO:1905259">
    <property type="term" value="P:negative regulation of nitrosative stress-induced intrinsic apoptotic signaling pathway"/>
    <property type="evidence" value="ECO:0000266"/>
    <property type="project" value="RGD"/>
</dbReference>
<dbReference type="GO" id="GO:1902176">
    <property type="term" value="P:negative regulation of oxidative stress-induced intrinsic apoptotic signaling pathway"/>
    <property type="evidence" value="ECO:0000266"/>
    <property type="project" value="RGD"/>
</dbReference>
<dbReference type="GO" id="GO:1903377">
    <property type="term" value="P:negative regulation of oxidative stress-induced neuron intrinsic apoptotic signaling pathway"/>
    <property type="evidence" value="ECO:0000250"/>
    <property type="project" value="ParkinsonsUK-UCL"/>
</dbReference>
<dbReference type="GO" id="GO:0032435">
    <property type="term" value="P:negative regulation of proteasomal ubiquitin-dependent protein catabolic process"/>
    <property type="evidence" value="ECO:0000266"/>
    <property type="project" value="RGD"/>
</dbReference>
<dbReference type="GO" id="GO:0042177">
    <property type="term" value="P:negative regulation of protein catabolic process"/>
    <property type="evidence" value="ECO:0000266"/>
    <property type="project" value="RGD"/>
</dbReference>
<dbReference type="GO" id="GO:0046826">
    <property type="term" value="P:negative regulation of protein export from nucleus"/>
    <property type="evidence" value="ECO:0000250"/>
    <property type="project" value="ParkinsonsUK-UCL"/>
</dbReference>
<dbReference type="GO" id="GO:1903094">
    <property type="term" value="P:negative regulation of protein K48-linked deubiquitination"/>
    <property type="evidence" value="ECO:0000250"/>
    <property type="project" value="ParkinsonsUK-UCL"/>
</dbReference>
<dbReference type="GO" id="GO:0033234">
    <property type="term" value="P:negative regulation of protein sumoylation"/>
    <property type="evidence" value="ECO:0000250"/>
    <property type="project" value="ParkinsonsUK-UCL"/>
</dbReference>
<dbReference type="GO" id="GO:0031397">
    <property type="term" value="P:negative regulation of protein ubiquitination"/>
    <property type="evidence" value="ECO:0000250"/>
    <property type="project" value="ParkinsonsUK-UCL"/>
</dbReference>
<dbReference type="GO" id="GO:1903427">
    <property type="term" value="P:negative regulation of reactive oxygen species biosynthetic process"/>
    <property type="evidence" value="ECO:0000250"/>
    <property type="project" value="UniProtKB"/>
</dbReference>
<dbReference type="GO" id="GO:0014912">
    <property type="term" value="P:negative regulation of smooth muscle cell migration"/>
    <property type="evidence" value="ECO:0000314"/>
    <property type="project" value="RGD"/>
</dbReference>
<dbReference type="GO" id="GO:1903122">
    <property type="term" value="P:negative regulation of TRAIL-activated apoptotic signaling pathway"/>
    <property type="evidence" value="ECO:0000250"/>
    <property type="project" value="ParkinsonsUK-UCL"/>
</dbReference>
<dbReference type="GO" id="GO:1904706">
    <property type="term" value="P:negative regulation of vascular associated smooth muscle cell proliferation"/>
    <property type="evidence" value="ECO:0000314"/>
    <property type="project" value="RGD"/>
</dbReference>
<dbReference type="GO" id="GO:0002866">
    <property type="term" value="P:positive regulation of acute inflammatory response to antigenic stimulus"/>
    <property type="evidence" value="ECO:0000250"/>
    <property type="project" value="UniProtKB"/>
</dbReference>
<dbReference type="GO" id="GO:1903181">
    <property type="term" value="P:positive regulation of dopamine biosynthetic process"/>
    <property type="evidence" value="ECO:0000250"/>
    <property type="project" value="ParkinsonsUK-UCL"/>
</dbReference>
<dbReference type="GO" id="GO:1905516">
    <property type="term" value="P:positive regulation of fertilization"/>
    <property type="evidence" value="ECO:0000315"/>
    <property type="project" value="RGD"/>
</dbReference>
<dbReference type="GO" id="GO:0010628">
    <property type="term" value="P:positive regulation of gene expression"/>
    <property type="evidence" value="ECO:0000266"/>
    <property type="project" value="RGD"/>
</dbReference>
<dbReference type="GO" id="GO:0032757">
    <property type="term" value="P:positive regulation of interleukin-8 production"/>
    <property type="evidence" value="ECO:0000250"/>
    <property type="project" value="ParkinsonsUK-UCL"/>
</dbReference>
<dbReference type="GO" id="GO:1903197">
    <property type="term" value="P:positive regulation of L-dopa biosynthetic process"/>
    <property type="evidence" value="ECO:0000250"/>
    <property type="project" value="ParkinsonsUK-UCL"/>
</dbReference>
<dbReference type="GO" id="GO:1902958">
    <property type="term" value="P:positive regulation of mitochondrial electron transport, NADH to ubiquinone"/>
    <property type="evidence" value="ECO:0000250"/>
    <property type="project" value="ParkinsonsUK-UCL"/>
</dbReference>
<dbReference type="GO" id="GO:0033864">
    <property type="term" value="P:positive regulation of NAD(P)H oxidase activity"/>
    <property type="evidence" value="ECO:0000250"/>
    <property type="project" value="UniProtKB"/>
</dbReference>
<dbReference type="GO" id="GO:2000277">
    <property type="term" value="P:positive regulation of oxidative phosphorylation uncoupler activity"/>
    <property type="evidence" value="ECO:0000250"/>
    <property type="project" value="UniProtKB"/>
</dbReference>
<dbReference type="GO" id="GO:1902177">
    <property type="term" value="P:positive regulation of oxidative stress-induced intrinsic apoptotic signaling pathway"/>
    <property type="evidence" value="ECO:0000266"/>
    <property type="project" value="RGD"/>
</dbReference>
<dbReference type="GO" id="GO:0051897">
    <property type="term" value="P:positive regulation of phosphatidylinositol 3-kinase/protein kinase B signal transduction"/>
    <property type="evidence" value="ECO:0000266"/>
    <property type="project" value="RGD"/>
</dbReference>
<dbReference type="GO" id="GO:1900182">
    <property type="term" value="P:positive regulation of protein localization to nucleus"/>
    <property type="evidence" value="ECO:0000250"/>
    <property type="project" value="ParkinsonsUK-UCL"/>
</dbReference>
<dbReference type="GO" id="GO:0031334">
    <property type="term" value="P:positive regulation of protein-containing complex assembly"/>
    <property type="evidence" value="ECO:0000250"/>
    <property type="project" value="ParkinsonsUK-UCL"/>
</dbReference>
<dbReference type="GO" id="GO:1903428">
    <property type="term" value="P:positive regulation of reactive oxygen species biosynthetic process"/>
    <property type="evidence" value="ECO:0000266"/>
    <property type="project" value="RGD"/>
</dbReference>
<dbReference type="GO" id="GO:2000379">
    <property type="term" value="P:positive regulation of reactive oxygen species metabolic process"/>
    <property type="evidence" value="ECO:0000250"/>
    <property type="project" value="ParkinsonsUK-UCL"/>
</dbReference>
<dbReference type="GO" id="GO:0045944">
    <property type="term" value="P:positive regulation of transcription by RNA polymerase II"/>
    <property type="evidence" value="ECO:0000250"/>
    <property type="project" value="ParkinsonsUK-UCL"/>
</dbReference>
<dbReference type="GO" id="GO:0030091">
    <property type="term" value="P:protein repair"/>
    <property type="evidence" value="ECO:0000266"/>
    <property type="project" value="RGD"/>
</dbReference>
<dbReference type="GO" id="GO:0050821">
    <property type="term" value="P:protein stabilization"/>
    <property type="evidence" value="ECO:0000250"/>
    <property type="project" value="UniProtKB"/>
</dbReference>
<dbReference type="GO" id="GO:0006508">
    <property type="term" value="P:proteolysis"/>
    <property type="evidence" value="ECO:0007669"/>
    <property type="project" value="UniProtKB-KW"/>
</dbReference>
<dbReference type="GO" id="GO:0060765">
    <property type="term" value="P:regulation of androgen receptor signaling pathway"/>
    <property type="evidence" value="ECO:0000250"/>
    <property type="project" value="ParkinsonsUK-UCL"/>
</dbReference>
<dbReference type="GO" id="GO:0050727">
    <property type="term" value="P:regulation of inflammatory response"/>
    <property type="evidence" value="ECO:0000250"/>
    <property type="project" value="UniProtKB"/>
</dbReference>
<dbReference type="GO" id="GO:0051881">
    <property type="term" value="P:regulation of mitochondrial membrane potential"/>
    <property type="evidence" value="ECO:0000250"/>
    <property type="project" value="ParkinsonsUK-UCL"/>
</dbReference>
<dbReference type="GO" id="GO:0043523">
    <property type="term" value="P:regulation of neuron apoptotic process"/>
    <property type="evidence" value="ECO:0000250"/>
    <property type="project" value="UniProtKB"/>
</dbReference>
<dbReference type="GO" id="GO:1903376">
    <property type="term" value="P:regulation of oxidative stress-induced neuron intrinsic apoptotic signaling pathway"/>
    <property type="evidence" value="ECO:0000266"/>
    <property type="project" value="RGD"/>
</dbReference>
<dbReference type="GO" id="GO:1900242">
    <property type="term" value="P:regulation of synaptic vesicle endocytosis"/>
    <property type="evidence" value="ECO:0000266"/>
    <property type="project" value="RGD"/>
</dbReference>
<dbReference type="GO" id="GO:0019430">
    <property type="term" value="P:removal of superoxide radicals"/>
    <property type="evidence" value="ECO:0000250"/>
    <property type="project" value="ParkinsonsUK-UCL"/>
</dbReference>
<dbReference type="GO" id="GO:0042542">
    <property type="term" value="P:response to hydrogen peroxide"/>
    <property type="evidence" value="ECO:0000266"/>
    <property type="project" value="RGD"/>
</dbReference>
<dbReference type="GO" id="GO:0006979">
    <property type="term" value="P:response to oxidative stress"/>
    <property type="evidence" value="ECO:0000315"/>
    <property type="project" value="RGD"/>
</dbReference>
<dbReference type="GO" id="GO:0009410">
    <property type="term" value="P:response to xenobiotic stimulus"/>
    <property type="evidence" value="ECO:0000270"/>
    <property type="project" value="RGD"/>
</dbReference>
<dbReference type="GO" id="GO:0007338">
    <property type="term" value="P:single fertilization"/>
    <property type="evidence" value="ECO:0007669"/>
    <property type="project" value="UniProtKB-KW"/>
</dbReference>
<dbReference type="GO" id="GO:0007283">
    <property type="term" value="P:spermatogenesis"/>
    <property type="evidence" value="ECO:0000270"/>
    <property type="project" value="RGD"/>
</dbReference>
<dbReference type="GO" id="GO:0001963">
    <property type="term" value="P:synaptic transmission, dopaminergic"/>
    <property type="evidence" value="ECO:0000266"/>
    <property type="project" value="RGD"/>
</dbReference>
<dbReference type="CDD" id="cd03135">
    <property type="entry name" value="GATase1_DJ-1"/>
    <property type="match status" value="1"/>
</dbReference>
<dbReference type="FunFam" id="3.40.50.880:FF:000046">
    <property type="entry name" value="Protein/nucleic acid deglycase DJ-1"/>
    <property type="match status" value="1"/>
</dbReference>
<dbReference type="Gene3D" id="3.40.50.880">
    <property type="match status" value="1"/>
</dbReference>
<dbReference type="InterPro" id="IPR029062">
    <property type="entry name" value="Class_I_gatase-like"/>
</dbReference>
<dbReference type="InterPro" id="IPR006287">
    <property type="entry name" value="DJ-1"/>
</dbReference>
<dbReference type="InterPro" id="IPR002818">
    <property type="entry name" value="DJ-1/PfpI"/>
</dbReference>
<dbReference type="InterPro" id="IPR050325">
    <property type="entry name" value="Prot/Nucl_acid_deglycase"/>
</dbReference>
<dbReference type="NCBIfam" id="TIGR01383">
    <property type="entry name" value="not_thiJ"/>
    <property type="match status" value="1"/>
</dbReference>
<dbReference type="PANTHER" id="PTHR48094:SF12">
    <property type="entry name" value="PARKINSON DISEASE PROTEIN 7 HOMOLOG"/>
    <property type="match status" value="1"/>
</dbReference>
<dbReference type="PANTHER" id="PTHR48094">
    <property type="entry name" value="PROTEIN/NUCLEIC ACID DEGLYCASE DJ-1-RELATED"/>
    <property type="match status" value="1"/>
</dbReference>
<dbReference type="Pfam" id="PF01965">
    <property type="entry name" value="DJ-1_PfpI"/>
    <property type="match status" value="1"/>
</dbReference>
<dbReference type="SUPFAM" id="SSF52317">
    <property type="entry name" value="Class I glutamine amidotransferase-like"/>
    <property type="match status" value="1"/>
</dbReference>
<organism>
    <name type="scientific">Rattus norvegicus</name>
    <name type="common">Rat</name>
    <dbReference type="NCBI Taxonomy" id="10116"/>
    <lineage>
        <taxon>Eukaryota</taxon>
        <taxon>Metazoa</taxon>
        <taxon>Chordata</taxon>
        <taxon>Craniata</taxon>
        <taxon>Vertebrata</taxon>
        <taxon>Euteleostomi</taxon>
        <taxon>Mammalia</taxon>
        <taxon>Eutheria</taxon>
        <taxon>Euarchontoglires</taxon>
        <taxon>Glires</taxon>
        <taxon>Rodentia</taxon>
        <taxon>Myomorpha</taxon>
        <taxon>Muroidea</taxon>
        <taxon>Muridae</taxon>
        <taxon>Murinae</taxon>
        <taxon>Rattus</taxon>
    </lineage>
</organism>
<gene>
    <name evidence="11" type="primary">Park7</name>
    <name type="synonym">Cap1</name>
</gene>
<evidence type="ECO:0000250" key="1">
    <source>
        <dbReference type="UniProtKB" id="Q99497"/>
    </source>
</evidence>
<evidence type="ECO:0000250" key="2">
    <source>
        <dbReference type="UniProtKB" id="Q99LX0"/>
    </source>
</evidence>
<evidence type="ECO:0000269" key="3">
    <source>
    </source>
</evidence>
<evidence type="ECO:0000269" key="4">
    <source>
    </source>
</evidence>
<evidence type="ECO:0000269" key="5">
    <source>
    </source>
</evidence>
<evidence type="ECO:0000269" key="6">
    <source>
    </source>
</evidence>
<evidence type="ECO:0000269" key="7">
    <source>
    </source>
</evidence>
<evidence type="ECO:0000303" key="8">
    <source>
    </source>
</evidence>
<evidence type="ECO:0000303" key="9">
    <source>
    </source>
</evidence>
<evidence type="ECO:0000305" key="10"/>
<evidence type="ECO:0000312" key="11">
    <source>
        <dbReference type="RGD" id="621808"/>
    </source>
</evidence>
<reference key="1">
    <citation type="journal article" date="1998" name="Biochem. Biophys. Res. Commun.">
        <title>Molecular cloning and expression of rat contraception associated protein 1 (CAP1), a protein putatively involved in fertilization.</title>
        <authorList>
            <person name="Wagenfeld A."/>
            <person name="Gromoll J."/>
            <person name="Cooper T.G."/>
        </authorList>
    </citation>
    <scope>NUCLEOTIDE SEQUENCE [MRNA]</scope>
    <scope>PROTEIN SEQUENCE OF 13-29 AND 65-74</scope>
    <scope>TISSUE SPECIFICITY</scope>
    <source>
        <tissue>Testis</tissue>
    </source>
</reference>
<reference key="2">
    <citation type="journal article" date="1998" name="J. Androl.">
        <title>SP22: a novel fertility protein from a highly conserved gene family.</title>
        <authorList>
            <person name="Welch J.E."/>
            <person name="Barbee R.R."/>
            <person name="Roberts N.L."/>
            <person name="Suarez J.D."/>
            <person name="Klinefelter G.R."/>
        </authorList>
    </citation>
    <scope>NUCLEOTIDE SEQUENCE [MRNA]</scope>
    <source>
        <strain>Sprague-Dawley</strain>
        <tissue>Testis</tissue>
    </source>
</reference>
<reference key="3">
    <citation type="submission" date="1999-06" db="EMBL/GenBank/DDBJ databases">
        <authorList>
            <person name="Welch J.E."/>
            <person name="Barbee R.R."/>
            <person name="Roberts N.L."/>
            <person name="Suarez J.D."/>
            <person name="Klinefelter G.R."/>
        </authorList>
    </citation>
    <scope>NUCLEOTIDE SEQUENCE [MRNA]</scope>
    <source>
        <strain>Sprague-Dawley</strain>
        <tissue>Testis</tissue>
    </source>
</reference>
<reference key="4">
    <citation type="journal article" date="1999" name="J. Cell. Biochem.">
        <title>Identification and characterization of a novel protein that regulates RNA-protein interaction.</title>
        <authorList>
            <person name="Hod Y."/>
            <person name="Pentyala S.N."/>
            <person name="Whyard T.C."/>
            <person name="El-Maghrabi M.R."/>
        </authorList>
    </citation>
    <scope>PROTEIN SEQUENCE OF 27-45</scope>
    <scope>ASSOCIATION WITH AN RNA-BINDING COMPLEX</scope>
    <scope>SUBCELLULAR LOCATION</scope>
</reference>
<reference key="5">
    <citation type="submission" date="2007-07" db="UniProtKB">
        <authorList>
            <person name="Lubec G."/>
            <person name="Afjehi-Sadat L."/>
            <person name="Chen W.-Q."/>
            <person name="Kang S.U."/>
        </authorList>
    </citation>
    <scope>PROTEIN SEQUENCE OF 33-48; 63-89; 100-122; 133-145 AND 157-175</scope>
    <scope>IDENTIFICATION BY MASS SPECTROMETRY</scope>
    <source>
        <strain>Sprague-Dawley</strain>
        <tissue>Brain</tissue>
        <tissue>Hippocampus</tissue>
        <tissue>Spinal cord</tissue>
    </source>
</reference>
<reference key="6">
    <citation type="journal article" date="2013" name="Hum. Mol. Genet.">
        <title>DJ-1 associates with lipid rafts by palmitoylation and regulates lipid rafts-dependent endocytosis in astrocytes.</title>
        <authorList>
            <person name="Kim K.S."/>
            <person name="Kim J.S."/>
            <person name="Park J.Y."/>
            <person name="Suh Y.H."/>
            <person name="Jou I."/>
            <person name="Joe E.H."/>
            <person name="Park S.M."/>
        </authorList>
    </citation>
    <scope>SUBCELLULAR LOCATION</scope>
</reference>
<reference key="7">
    <citation type="journal article" date="2019" name="IScience">
        <title>Rewiring of the Human Mitochondrial Interactome during Neuronal Reprogramming Reveals Regulators of the Respirasome and Neurogenesis.</title>
        <authorList>
            <person name="Moutaoufik M.T."/>
            <person name="Malty R."/>
            <person name="Amin S."/>
            <person name="Zhang Q."/>
            <person name="Phanse S."/>
            <person name="Gagarinova A."/>
            <person name="Zilocchi M."/>
            <person name="Hoell L."/>
            <person name="Minic Z."/>
            <person name="Gagarinova M."/>
            <person name="Aoki H."/>
            <person name="Stockwell J."/>
            <person name="Jessulat M."/>
            <person name="Goebels F."/>
            <person name="Broderick K."/>
            <person name="Scott N.E."/>
            <person name="Vlasblom J."/>
            <person name="Musso G."/>
            <person name="Prasad B."/>
            <person name="Lamantea E."/>
            <person name="Garavaglia B."/>
            <person name="Rajput A."/>
            <person name="Murayama K."/>
            <person name="Okazaki Y."/>
            <person name="Foster L.J."/>
            <person name="Bader G.D."/>
            <person name="Cayabyab F.S."/>
            <person name="Babu M."/>
        </authorList>
    </citation>
    <scope>INTERACTION WITH NENF</scope>
    <scope>SUBCELLULAR LOCATION</scope>
</reference>
<reference key="8">
    <citation type="journal article" date="2019" name="J. Mol. Neurosci.">
        <title>Characterization of Motor and Non-Motor Behavioral Alterations in the Dj-1 (PARK7) Knockout Rat.</title>
        <authorList>
            <person name="Kyser T.L."/>
            <person name="Dourson A.J."/>
            <person name="McGuire J.L."/>
            <person name="Hemmerle A.M."/>
            <person name="Williams M.T."/>
            <person name="Seroogy K.B."/>
        </authorList>
    </citation>
    <scope>DISRUPTION PHENOTYPE</scope>
</reference>
<feature type="initiator methionine" description="Removed" evidence="1">
    <location>
        <position position="1"/>
    </location>
</feature>
<feature type="chain" id="PRO_0000157851" description="Parkinson disease protein 7 homolog">
    <location>
        <begin position="2"/>
        <end status="unknown"/>
    </location>
</feature>
<feature type="propeptide" id="PRO_0000405561" description="Removed in mature form">
    <location>
        <begin status="unknown"/>
        <end position="189"/>
    </location>
</feature>
<feature type="active site" description="Nucleophile" evidence="1">
    <location>
        <position position="106"/>
    </location>
</feature>
<feature type="active site" evidence="1">
    <location>
        <position position="126"/>
    </location>
</feature>
<feature type="site" description="Cleavage; by CASP6" evidence="2">
    <location>
        <begin position="149"/>
        <end position="150"/>
    </location>
</feature>
<feature type="modified residue" description="N-acetylalanine" evidence="1">
    <location>
        <position position="2"/>
    </location>
</feature>
<feature type="modified residue" description="Phosphotyrosine" evidence="1">
    <location>
        <position position="67"/>
    </location>
</feature>
<feature type="modified residue" description="Cysteine sulfinic acid (-SO2H); alternate" evidence="1">
    <location>
        <position position="106"/>
    </location>
</feature>
<feature type="modified residue" description="N6-acetyllysine" evidence="2">
    <location>
        <position position="148"/>
    </location>
</feature>
<feature type="modified residue" description="N6-succinyllysine" evidence="2">
    <location>
        <position position="182"/>
    </location>
</feature>
<feature type="lipid moiety-binding region" description="S-palmitoyl cysteine" evidence="1">
    <location>
        <position position="46"/>
    </location>
</feature>
<feature type="lipid moiety-binding region" description="S-palmitoyl cysteine" evidence="1">
    <location>
        <position position="53"/>
    </location>
</feature>
<feature type="lipid moiety-binding region" description="S-palmitoyl cysteine; alternate" evidence="1">
    <location>
        <position position="106"/>
    </location>
</feature>
<feature type="cross-link" description="Glycyl lysine isopeptide (Lys-Gly) (interchain with G-Cter in SUMO)" evidence="1">
    <location>
        <position position="130"/>
    </location>
</feature>